<comment type="function">
    <text evidence="1">Transcription factor. Probably binds E-box motifs 5'-CANNTG-3' in complex with transcription factor TCF3/E12. Negatively modulates transcription of target genes such as CDH1/E-cadherin, perhaps by recruiting the PRC2 repressive complex to regulatory elements. Regulates ameloblast development and tooth germ growth, perhaps acting by positively modulating migration of inner enamel epithelium (IEE) cells. Plays a role in enamel formation.</text>
</comment>
<comment type="subunit">
    <text evidence="1">Interacts with transcription factor TCF3/E12.</text>
</comment>
<comment type="subcellular location">
    <subcellularLocation>
        <location evidence="2">Nucleus</location>
    </subcellularLocation>
</comment>
<comment type="sequence caution" evidence="4">
    <conflict type="erroneous initiation">
        <sequence resource="EMBL-CDS" id="DAA00301"/>
    </conflict>
</comment>
<gene>
    <name type="primary">ASCL5</name>
    <name type="synonym">BHLHA47</name>
</gene>
<organism>
    <name type="scientific">Homo sapiens</name>
    <name type="common">Human</name>
    <dbReference type="NCBI Taxonomy" id="9606"/>
    <lineage>
        <taxon>Eukaryota</taxon>
        <taxon>Metazoa</taxon>
        <taxon>Chordata</taxon>
        <taxon>Craniata</taxon>
        <taxon>Vertebrata</taxon>
        <taxon>Euteleostomi</taxon>
        <taxon>Mammalia</taxon>
        <taxon>Eutheria</taxon>
        <taxon>Euarchontoglires</taxon>
        <taxon>Primates</taxon>
        <taxon>Haplorrhini</taxon>
        <taxon>Catarrhini</taxon>
        <taxon>Hominidae</taxon>
        <taxon>Homo</taxon>
    </lineage>
</organism>
<sequence length="278" mass="29462">MPMGAAERGAGPQSSAAPWAGSEKAAKRGPSKSWYPRAAASDVTCPTGGDGADPKPGPFGGGLALGPAPRGTMNNNFCRALVDRRPLGPPSCMQLGVMPPPRQAPLPPAEPLGNVPFLLYPGPAEPPYYDAYAGVFPYVPFPGAFGVYEYPFEPAFIQKRNERERQRVKCVNEGYARLRGHLPGALAEKRLSKVETLRAAIRYIKYLQELLSSAPDGSTPPASRGLPGTGPCPAPPATPRPDRPGDGEARAPSSLVPESSESSCFSPSPFLESEESWH</sequence>
<name>ASCL5_HUMAN</name>
<keyword id="KW-0238">DNA-binding</keyword>
<keyword id="KW-0539">Nucleus</keyword>
<keyword id="KW-1267">Proteomics identification</keyword>
<keyword id="KW-1185">Reference proteome</keyword>
<keyword id="KW-0804">Transcription</keyword>
<keyword id="KW-0805">Transcription regulation</keyword>
<accession>Q7RTU5</accession>
<feature type="chain" id="PRO_0000317298" description="Achaete-scute homolog 5">
    <location>
        <begin position="1"/>
        <end position="278"/>
    </location>
</feature>
<feature type="domain" description="bHLH" evidence="2">
    <location>
        <begin position="155"/>
        <end position="207"/>
    </location>
</feature>
<feature type="region of interest" description="Disordered" evidence="3">
    <location>
        <begin position="1"/>
        <end position="66"/>
    </location>
</feature>
<feature type="region of interest" description="Disordered" evidence="3">
    <location>
        <begin position="214"/>
        <end position="278"/>
    </location>
</feature>
<feature type="compositionally biased region" description="Pro residues" evidence="3">
    <location>
        <begin position="230"/>
        <end position="239"/>
    </location>
</feature>
<feature type="compositionally biased region" description="Basic and acidic residues" evidence="3">
    <location>
        <begin position="240"/>
        <end position="249"/>
    </location>
</feature>
<feature type="compositionally biased region" description="Low complexity" evidence="3">
    <location>
        <begin position="252"/>
        <end position="271"/>
    </location>
</feature>
<dbReference type="EMBL" id="AL139159">
    <property type="status" value="NOT_ANNOTATED_CDS"/>
    <property type="molecule type" value="Genomic_DNA"/>
</dbReference>
<dbReference type="EMBL" id="BK000139">
    <property type="protein sequence ID" value="DAA00301.1"/>
    <property type="status" value="ALT_INIT"/>
    <property type="molecule type" value="Genomic_DNA"/>
</dbReference>
<dbReference type="SMR" id="Q7RTU5"/>
<dbReference type="FunCoup" id="Q7RTU5">
    <property type="interactions" value="126"/>
</dbReference>
<dbReference type="IntAct" id="Q7RTU5">
    <property type="interactions" value="2"/>
</dbReference>
<dbReference type="STRING" id="9606.ENSP00000472681"/>
<dbReference type="GlyGen" id="Q7RTU5">
    <property type="glycosylation" value="1 site"/>
</dbReference>
<dbReference type="PhosphoSitePlus" id="Q7RTU5"/>
<dbReference type="BioMuta" id="ASCL5"/>
<dbReference type="DMDM" id="166988402"/>
<dbReference type="MassIVE" id="Q7RTU5"/>
<dbReference type="PaxDb" id="9606-ENSP00000472681"/>
<dbReference type="UCSC" id="uc031prl.1">
    <property type="organism name" value="human"/>
</dbReference>
<dbReference type="AGR" id="HGNC:33169"/>
<dbReference type="GeneCards" id="ASCL5"/>
<dbReference type="HGNC" id="HGNC:33169">
    <property type="gene designation" value="ASCL5"/>
</dbReference>
<dbReference type="MIM" id="620809">
    <property type="type" value="gene"/>
</dbReference>
<dbReference type="neXtProt" id="NX_Q7RTU5"/>
<dbReference type="VEuPathDB" id="HostDB:ENSG00000232237"/>
<dbReference type="eggNOG" id="KOG4029">
    <property type="taxonomic scope" value="Eukaryota"/>
</dbReference>
<dbReference type="InParanoid" id="Q7RTU5"/>
<dbReference type="OrthoDB" id="5976910at2759"/>
<dbReference type="PAN-GO" id="Q7RTU5">
    <property type="GO annotations" value="4 GO annotations based on evolutionary models"/>
</dbReference>
<dbReference type="PhylomeDB" id="Q7RTU5"/>
<dbReference type="PathwayCommons" id="Q7RTU5"/>
<dbReference type="SignaLink" id="Q7RTU5"/>
<dbReference type="Pharos" id="Q7RTU5">
    <property type="development level" value="Tdark"/>
</dbReference>
<dbReference type="PRO" id="PR:Q7RTU5"/>
<dbReference type="Proteomes" id="UP000005640">
    <property type="component" value="Chromosome 1"/>
</dbReference>
<dbReference type="RNAct" id="Q7RTU5">
    <property type="molecule type" value="protein"/>
</dbReference>
<dbReference type="Bgee" id="ENSG00000232237">
    <property type="expression patterns" value="Expressed in body of pancreas and 60 other cell types or tissues"/>
</dbReference>
<dbReference type="ExpressionAtlas" id="Q7RTU5">
    <property type="expression patterns" value="baseline and differential"/>
</dbReference>
<dbReference type="GO" id="GO:0000785">
    <property type="term" value="C:chromatin"/>
    <property type="evidence" value="ECO:0000247"/>
    <property type="project" value="NTNU_SB"/>
</dbReference>
<dbReference type="GO" id="GO:0090575">
    <property type="term" value="C:RNA polymerase II transcription regulator complex"/>
    <property type="evidence" value="ECO:0000318"/>
    <property type="project" value="GO_Central"/>
</dbReference>
<dbReference type="GO" id="GO:0000981">
    <property type="term" value="F:DNA-binding transcription factor activity, RNA polymerase II-specific"/>
    <property type="evidence" value="ECO:0000247"/>
    <property type="project" value="NTNU_SB"/>
</dbReference>
<dbReference type="GO" id="GO:0046983">
    <property type="term" value="F:protein dimerization activity"/>
    <property type="evidence" value="ECO:0007669"/>
    <property type="project" value="InterPro"/>
</dbReference>
<dbReference type="GO" id="GO:0000977">
    <property type="term" value="F:RNA polymerase II transcription regulatory region sequence-specific DNA binding"/>
    <property type="evidence" value="ECO:0000318"/>
    <property type="project" value="GO_Central"/>
</dbReference>
<dbReference type="GO" id="GO:0006357">
    <property type="term" value="P:regulation of transcription by RNA polymerase II"/>
    <property type="evidence" value="ECO:0000318"/>
    <property type="project" value="GO_Central"/>
</dbReference>
<dbReference type="CDD" id="cd19747">
    <property type="entry name" value="bHLH_TS_ASCL5"/>
    <property type="match status" value="1"/>
</dbReference>
<dbReference type="FunFam" id="4.10.280.10:FF:000038">
    <property type="entry name" value="achaete-scute homolog 3"/>
    <property type="match status" value="1"/>
</dbReference>
<dbReference type="Gene3D" id="4.10.280.10">
    <property type="entry name" value="Helix-loop-helix DNA-binding domain"/>
    <property type="match status" value="1"/>
</dbReference>
<dbReference type="InterPro" id="IPR011598">
    <property type="entry name" value="bHLH_dom"/>
</dbReference>
<dbReference type="InterPro" id="IPR050283">
    <property type="entry name" value="E-box_TF_Regulators"/>
</dbReference>
<dbReference type="InterPro" id="IPR036638">
    <property type="entry name" value="HLH_DNA-bd_sf"/>
</dbReference>
<dbReference type="PANTHER" id="PTHR23349">
    <property type="entry name" value="BASIC HELIX-LOOP-HELIX TRANSCRIPTION FACTOR, TWIST"/>
    <property type="match status" value="1"/>
</dbReference>
<dbReference type="PANTHER" id="PTHR23349:SF108">
    <property type="entry name" value="BHLH DOMAIN-CONTAINING PROTEIN"/>
    <property type="match status" value="1"/>
</dbReference>
<dbReference type="Pfam" id="PF00010">
    <property type="entry name" value="HLH"/>
    <property type="match status" value="1"/>
</dbReference>
<dbReference type="SMART" id="SM00353">
    <property type="entry name" value="HLH"/>
    <property type="match status" value="1"/>
</dbReference>
<dbReference type="SUPFAM" id="SSF47459">
    <property type="entry name" value="HLH, helix-loop-helix DNA-binding domain"/>
    <property type="match status" value="1"/>
</dbReference>
<dbReference type="PROSITE" id="PS50888">
    <property type="entry name" value="BHLH"/>
    <property type="match status" value="1"/>
</dbReference>
<proteinExistence type="evidence at protein level"/>
<evidence type="ECO:0000250" key="1">
    <source>
        <dbReference type="UniProtKB" id="M0QWB7"/>
    </source>
</evidence>
<evidence type="ECO:0000255" key="2">
    <source>
        <dbReference type="PROSITE-ProRule" id="PRU00981"/>
    </source>
</evidence>
<evidence type="ECO:0000256" key="3">
    <source>
        <dbReference type="SAM" id="MobiDB-lite"/>
    </source>
</evidence>
<evidence type="ECO:0000305" key="4"/>
<protein>
    <recommendedName>
        <fullName>Achaete-scute homolog 5</fullName>
        <shortName>ASH-5</shortName>
        <shortName>hASH5</shortName>
    </recommendedName>
    <alternativeName>
        <fullName>Class A basic helix-loop-helix protein 47</fullName>
        <shortName>bHLHa47</shortName>
    </alternativeName>
</protein>
<reference key="1">
    <citation type="journal article" date="2006" name="Nature">
        <title>The DNA sequence and biological annotation of human chromosome 1.</title>
        <authorList>
            <person name="Gregory S.G."/>
            <person name="Barlow K.F."/>
            <person name="McLay K.E."/>
            <person name="Kaul R."/>
            <person name="Swarbreck D."/>
            <person name="Dunham A."/>
            <person name="Scott C.E."/>
            <person name="Howe K.L."/>
            <person name="Woodfine K."/>
            <person name="Spencer C.C.A."/>
            <person name="Jones M.C."/>
            <person name="Gillson C."/>
            <person name="Searle S."/>
            <person name="Zhou Y."/>
            <person name="Kokocinski F."/>
            <person name="McDonald L."/>
            <person name="Evans R."/>
            <person name="Phillips K."/>
            <person name="Atkinson A."/>
            <person name="Cooper R."/>
            <person name="Jones C."/>
            <person name="Hall R.E."/>
            <person name="Andrews T.D."/>
            <person name="Lloyd C."/>
            <person name="Ainscough R."/>
            <person name="Almeida J.P."/>
            <person name="Ambrose K.D."/>
            <person name="Anderson F."/>
            <person name="Andrew R.W."/>
            <person name="Ashwell R.I.S."/>
            <person name="Aubin K."/>
            <person name="Babbage A.K."/>
            <person name="Bagguley C.L."/>
            <person name="Bailey J."/>
            <person name="Beasley H."/>
            <person name="Bethel G."/>
            <person name="Bird C.P."/>
            <person name="Bray-Allen S."/>
            <person name="Brown J.Y."/>
            <person name="Brown A.J."/>
            <person name="Buckley D."/>
            <person name="Burton J."/>
            <person name="Bye J."/>
            <person name="Carder C."/>
            <person name="Chapman J.C."/>
            <person name="Clark S.Y."/>
            <person name="Clarke G."/>
            <person name="Clee C."/>
            <person name="Cobley V."/>
            <person name="Collier R.E."/>
            <person name="Corby N."/>
            <person name="Coville G.J."/>
            <person name="Davies J."/>
            <person name="Deadman R."/>
            <person name="Dunn M."/>
            <person name="Earthrowl M."/>
            <person name="Ellington A.G."/>
            <person name="Errington H."/>
            <person name="Frankish A."/>
            <person name="Frankland J."/>
            <person name="French L."/>
            <person name="Garner P."/>
            <person name="Garnett J."/>
            <person name="Gay L."/>
            <person name="Ghori M.R.J."/>
            <person name="Gibson R."/>
            <person name="Gilby L.M."/>
            <person name="Gillett W."/>
            <person name="Glithero R.J."/>
            <person name="Grafham D.V."/>
            <person name="Griffiths C."/>
            <person name="Griffiths-Jones S."/>
            <person name="Grocock R."/>
            <person name="Hammond S."/>
            <person name="Harrison E.S.I."/>
            <person name="Hart E."/>
            <person name="Haugen E."/>
            <person name="Heath P.D."/>
            <person name="Holmes S."/>
            <person name="Holt K."/>
            <person name="Howden P.J."/>
            <person name="Hunt A.R."/>
            <person name="Hunt S.E."/>
            <person name="Hunter G."/>
            <person name="Isherwood J."/>
            <person name="James R."/>
            <person name="Johnson C."/>
            <person name="Johnson D."/>
            <person name="Joy A."/>
            <person name="Kay M."/>
            <person name="Kershaw J.K."/>
            <person name="Kibukawa M."/>
            <person name="Kimberley A.M."/>
            <person name="King A."/>
            <person name="Knights A.J."/>
            <person name="Lad H."/>
            <person name="Laird G."/>
            <person name="Lawlor S."/>
            <person name="Leongamornlert D.A."/>
            <person name="Lloyd D.M."/>
            <person name="Loveland J."/>
            <person name="Lovell J."/>
            <person name="Lush M.J."/>
            <person name="Lyne R."/>
            <person name="Martin S."/>
            <person name="Mashreghi-Mohammadi M."/>
            <person name="Matthews L."/>
            <person name="Matthews N.S.W."/>
            <person name="McLaren S."/>
            <person name="Milne S."/>
            <person name="Mistry S."/>
            <person name="Moore M.J.F."/>
            <person name="Nickerson T."/>
            <person name="O'Dell C.N."/>
            <person name="Oliver K."/>
            <person name="Palmeiri A."/>
            <person name="Palmer S.A."/>
            <person name="Parker A."/>
            <person name="Patel D."/>
            <person name="Pearce A.V."/>
            <person name="Peck A.I."/>
            <person name="Pelan S."/>
            <person name="Phelps K."/>
            <person name="Phillimore B.J."/>
            <person name="Plumb R."/>
            <person name="Rajan J."/>
            <person name="Raymond C."/>
            <person name="Rouse G."/>
            <person name="Saenphimmachak C."/>
            <person name="Sehra H.K."/>
            <person name="Sheridan E."/>
            <person name="Shownkeen R."/>
            <person name="Sims S."/>
            <person name="Skuce C.D."/>
            <person name="Smith M."/>
            <person name="Steward C."/>
            <person name="Subramanian S."/>
            <person name="Sycamore N."/>
            <person name="Tracey A."/>
            <person name="Tromans A."/>
            <person name="Van Helmond Z."/>
            <person name="Wall M."/>
            <person name="Wallis J.M."/>
            <person name="White S."/>
            <person name="Whitehead S.L."/>
            <person name="Wilkinson J.E."/>
            <person name="Willey D.L."/>
            <person name="Williams H."/>
            <person name="Wilming L."/>
            <person name="Wray P.W."/>
            <person name="Wu Z."/>
            <person name="Coulson A."/>
            <person name="Vaudin M."/>
            <person name="Sulston J.E."/>
            <person name="Durbin R.M."/>
            <person name="Hubbard T."/>
            <person name="Wooster R."/>
            <person name="Dunham I."/>
            <person name="Carter N.P."/>
            <person name="McVean G."/>
            <person name="Ross M.T."/>
            <person name="Harrow J."/>
            <person name="Olson M.V."/>
            <person name="Beck S."/>
            <person name="Rogers J."/>
            <person name="Bentley D.R."/>
        </authorList>
    </citation>
    <scope>NUCLEOTIDE SEQUENCE [LARGE SCALE GENOMIC DNA]</scope>
</reference>
<reference key="2">
    <citation type="journal article" date="2002" name="Mech. Dev.">
        <title>Exhaustive identification of human class II basic helix-loop-helix proteins by virtual library screening.</title>
        <authorList>
            <person name="McLellan A.S."/>
            <person name="Langlands K."/>
            <person name="Kealey T."/>
        </authorList>
    </citation>
    <scope>IDENTIFICATION</scope>
</reference>